<accession>Q9LQR8</accession>
<accession>Q5XF45</accession>
<gene>
    <name evidence="7" type="primary">RPN3B</name>
    <name evidence="9" type="ordered locus">At1g75990</name>
    <name evidence="10" type="ORF">T4O12.21</name>
</gene>
<feature type="chain" id="PRO_0000173823" description="26S proteasome non-ATPase regulatory subunit 3 homolog B">
    <location>
        <begin position="1"/>
        <end position="487"/>
    </location>
</feature>
<feature type="domain" description="PCI" evidence="2">
    <location>
        <begin position="239"/>
        <end position="420"/>
    </location>
</feature>
<feature type="region of interest" description="Disordered" evidence="3">
    <location>
        <begin position="1"/>
        <end position="21"/>
    </location>
</feature>
<feature type="region of interest" description="Disordered" evidence="3">
    <location>
        <begin position="452"/>
        <end position="487"/>
    </location>
</feature>
<feature type="compositionally biased region" description="Polar residues" evidence="3">
    <location>
        <begin position="10"/>
        <end position="21"/>
    </location>
</feature>
<feature type="compositionally biased region" description="Basic and acidic residues" evidence="3">
    <location>
        <begin position="455"/>
        <end position="480"/>
    </location>
</feature>
<comment type="function">
    <text evidence="1">Acts as a regulatory subunit of the 26 proteasome which is involved in the ATP-dependent degradation of ubiquitinated proteins.</text>
</comment>
<comment type="subunit">
    <text evidence="4 5 6">Component of the 19S regulatory particle (RP/PA700) lid subcomplex of the 26S proteasome. The 26S proteasome is composed of a core protease (CP), known as the 20S proteasome, capped at one or both ends by the 19S regulatory particle (RP/PA700). The RP/PA700 complex is composed of at least 17 different subunits in two subcomplexes, the base and the lid, which form the portions proximal and distal to the 20S proteolytic core, respectively (PubMed:14623884, PubMed:20516081). Interacts with UCH1 and UCH2 (PubMed:22951400).</text>
</comment>
<comment type="tissue specificity">
    <text evidence="4">Preferentially expressed in flowers.</text>
</comment>
<comment type="similarity">
    <text evidence="8">Belongs to the proteasome subunit S3 family.</text>
</comment>
<comment type="sequence caution" evidence="8">
    <conflict type="erroneous gene model prediction">
        <sequence resource="EMBL-CDS" id="AAF26768"/>
    </conflict>
</comment>
<proteinExistence type="evidence at protein level"/>
<protein>
    <recommendedName>
        <fullName evidence="7">26S proteasome non-ATPase regulatory subunit 3 homolog B</fullName>
    </recommendedName>
    <alternativeName>
        <fullName evidence="7">26S proteasome regulatory subunit RPN3b</fullName>
        <shortName evidence="7">AtRPN3b</shortName>
    </alternativeName>
    <alternativeName>
        <fullName>26S proteasome regulatory subunit S3 homolog B</fullName>
    </alternativeName>
</protein>
<reference key="1">
    <citation type="journal article" date="2000" name="Nature">
        <title>Sequence and analysis of chromosome 1 of the plant Arabidopsis thaliana.</title>
        <authorList>
            <person name="Theologis A."/>
            <person name="Ecker J.R."/>
            <person name="Palm C.J."/>
            <person name="Federspiel N.A."/>
            <person name="Kaul S."/>
            <person name="White O."/>
            <person name="Alonso J."/>
            <person name="Altafi H."/>
            <person name="Araujo R."/>
            <person name="Bowman C.L."/>
            <person name="Brooks S.Y."/>
            <person name="Buehler E."/>
            <person name="Chan A."/>
            <person name="Chao Q."/>
            <person name="Chen H."/>
            <person name="Cheuk R.F."/>
            <person name="Chin C.W."/>
            <person name="Chung M.K."/>
            <person name="Conn L."/>
            <person name="Conway A.B."/>
            <person name="Conway A.R."/>
            <person name="Creasy T.H."/>
            <person name="Dewar K."/>
            <person name="Dunn P."/>
            <person name="Etgu P."/>
            <person name="Feldblyum T.V."/>
            <person name="Feng J.-D."/>
            <person name="Fong B."/>
            <person name="Fujii C.Y."/>
            <person name="Gill J.E."/>
            <person name="Goldsmith A.D."/>
            <person name="Haas B."/>
            <person name="Hansen N.F."/>
            <person name="Hughes B."/>
            <person name="Huizar L."/>
            <person name="Hunter J.L."/>
            <person name="Jenkins J."/>
            <person name="Johnson-Hopson C."/>
            <person name="Khan S."/>
            <person name="Khaykin E."/>
            <person name="Kim C.J."/>
            <person name="Koo H.L."/>
            <person name="Kremenetskaia I."/>
            <person name="Kurtz D.B."/>
            <person name="Kwan A."/>
            <person name="Lam B."/>
            <person name="Langin-Hooper S."/>
            <person name="Lee A."/>
            <person name="Lee J.M."/>
            <person name="Lenz C.A."/>
            <person name="Li J.H."/>
            <person name="Li Y.-P."/>
            <person name="Lin X."/>
            <person name="Liu S.X."/>
            <person name="Liu Z.A."/>
            <person name="Luros J.S."/>
            <person name="Maiti R."/>
            <person name="Marziali A."/>
            <person name="Militscher J."/>
            <person name="Miranda M."/>
            <person name="Nguyen M."/>
            <person name="Nierman W.C."/>
            <person name="Osborne B.I."/>
            <person name="Pai G."/>
            <person name="Peterson J."/>
            <person name="Pham P.K."/>
            <person name="Rizzo M."/>
            <person name="Rooney T."/>
            <person name="Rowley D."/>
            <person name="Sakano H."/>
            <person name="Salzberg S.L."/>
            <person name="Schwartz J.R."/>
            <person name="Shinn P."/>
            <person name="Southwick A.M."/>
            <person name="Sun H."/>
            <person name="Tallon L.J."/>
            <person name="Tambunga G."/>
            <person name="Toriumi M.J."/>
            <person name="Town C.D."/>
            <person name="Utterback T."/>
            <person name="Van Aken S."/>
            <person name="Vaysberg M."/>
            <person name="Vysotskaia V.S."/>
            <person name="Walker M."/>
            <person name="Wu D."/>
            <person name="Yu G."/>
            <person name="Fraser C.M."/>
            <person name="Venter J.C."/>
            <person name="Davis R.W."/>
        </authorList>
    </citation>
    <scope>NUCLEOTIDE SEQUENCE [LARGE SCALE GENOMIC DNA]</scope>
    <source>
        <strain>cv. Columbia</strain>
    </source>
</reference>
<reference key="2">
    <citation type="journal article" date="2017" name="Plant J.">
        <title>Araport11: a complete reannotation of the Arabidopsis thaliana reference genome.</title>
        <authorList>
            <person name="Cheng C.Y."/>
            <person name="Krishnakumar V."/>
            <person name="Chan A.P."/>
            <person name="Thibaud-Nissen F."/>
            <person name="Schobel S."/>
            <person name="Town C.D."/>
        </authorList>
    </citation>
    <scope>GENOME REANNOTATION</scope>
    <source>
        <strain>cv. Columbia</strain>
    </source>
</reference>
<reference key="3">
    <citation type="journal article" date="2003" name="Science">
        <title>Empirical analysis of transcriptional activity in the Arabidopsis genome.</title>
        <authorList>
            <person name="Yamada K."/>
            <person name="Lim J."/>
            <person name="Dale J.M."/>
            <person name="Chen H."/>
            <person name="Shinn P."/>
            <person name="Palm C.J."/>
            <person name="Southwick A.M."/>
            <person name="Wu H.C."/>
            <person name="Kim C.J."/>
            <person name="Nguyen M."/>
            <person name="Pham P.K."/>
            <person name="Cheuk R.F."/>
            <person name="Karlin-Newmann G."/>
            <person name="Liu S.X."/>
            <person name="Lam B."/>
            <person name="Sakano H."/>
            <person name="Wu T."/>
            <person name="Yu G."/>
            <person name="Miranda M."/>
            <person name="Quach H.L."/>
            <person name="Tripp M."/>
            <person name="Chang C.H."/>
            <person name="Lee J.M."/>
            <person name="Toriumi M.J."/>
            <person name="Chan M.M."/>
            <person name="Tang C.C."/>
            <person name="Onodera C.S."/>
            <person name="Deng J.M."/>
            <person name="Akiyama K."/>
            <person name="Ansari Y."/>
            <person name="Arakawa T."/>
            <person name="Banh J."/>
            <person name="Banno F."/>
            <person name="Bowser L."/>
            <person name="Brooks S.Y."/>
            <person name="Carninci P."/>
            <person name="Chao Q."/>
            <person name="Choy N."/>
            <person name="Enju A."/>
            <person name="Goldsmith A.D."/>
            <person name="Gurjal M."/>
            <person name="Hansen N.F."/>
            <person name="Hayashizaki Y."/>
            <person name="Johnson-Hopson C."/>
            <person name="Hsuan V.W."/>
            <person name="Iida K."/>
            <person name="Karnes M."/>
            <person name="Khan S."/>
            <person name="Koesema E."/>
            <person name="Ishida J."/>
            <person name="Jiang P.X."/>
            <person name="Jones T."/>
            <person name="Kawai J."/>
            <person name="Kamiya A."/>
            <person name="Meyers C."/>
            <person name="Nakajima M."/>
            <person name="Narusaka M."/>
            <person name="Seki M."/>
            <person name="Sakurai T."/>
            <person name="Satou M."/>
            <person name="Tamse R."/>
            <person name="Vaysberg M."/>
            <person name="Wallender E.K."/>
            <person name="Wong C."/>
            <person name="Yamamura Y."/>
            <person name="Yuan S."/>
            <person name="Shinozaki K."/>
            <person name="Davis R.W."/>
            <person name="Theologis A."/>
            <person name="Ecker J.R."/>
        </authorList>
    </citation>
    <scope>NUCLEOTIDE SEQUENCE [LARGE SCALE MRNA]</scope>
    <source>
        <strain>cv. Columbia</strain>
    </source>
</reference>
<reference key="4">
    <citation type="journal article" date="2004" name="J. Biol. Chem.">
        <title>Purification of the Arabidopsis 26 S proteasome: biochemical and molecular analyses revealed the presence of multiple isoforms.</title>
        <authorList>
            <person name="Yang P."/>
            <person name="Fu H."/>
            <person name="Walker J."/>
            <person name="Papa C.M."/>
            <person name="Smalle J."/>
            <person name="Ju Y.-M."/>
            <person name="Vierstra R.D."/>
        </authorList>
    </citation>
    <scope>SUBUNIT</scope>
    <scope>IDENTIFICATION BY MASS SPECTROMETRY</scope>
    <scope>TISSUE SPECIFICITY</scope>
</reference>
<reference key="5">
    <citation type="journal article" date="2010" name="J. Biol. Chem.">
        <title>Affinity purification of the Arabidopsis 26 S proteasome reveals a diverse array of plant proteolytic complexes.</title>
        <authorList>
            <person name="Book A.J."/>
            <person name="Gladman N.P."/>
            <person name="Lee S.S."/>
            <person name="Scalf M."/>
            <person name="Smith L.M."/>
            <person name="Vierstra R.D."/>
        </authorList>
    </citation>
    <scope>IDENTIFICATION BY MASS SPECTROMETRY</scope>
    <scope>CHARACTERIZATION OF THE 26S PROTEASOME COMPLEX</scope>
    <scope>SUBUNIT</scope>
</reference>
<reference key="6">
    <citation type="journal article" date="2012" name="Plant Signal. Behav.">
        <title>Evidence that the Arabidopsis Ubiquitin C-terminal Hydrolases 1 and 2 associate with the 26S proteasome and the TREX-2 complex.</title>
        <authorList>
            <person name="Tian G."/>
            <person name="Lu Q."/>
            <person name="Kohalmi S.E."/>
            <person name="Rothstein S.J."/>
            <person name="Cui Y."/>
        </authorList>
    </citation>
    <scope>INTERACTION WITH UCH1 AND UCH2</scope>
</reference>
<name>PSD3B_ARATH</name>
<keyword id="KW-0647">Proteasome</keyword>
<keyword id="KW-1185">Reference proteome</keyword>
<dbReference type="EMBL" id="AC007396">
    <property type="protein sequence ID" value="AAF26768.2"/>
    <property type="status" value="ALT_SEQ"/>
    <property type="molecule type" value="Genomic_DNA"/>
</dbReference>
<dbReference type="EMBL" id="CP002684">
    <property type="protein sequence ID" value="AEE35783.1"/>
    <property type="molecule type" value="Genomic_DNA"/>
</dbReference>
<dbReference type="EMBL" id="AY057508">
    <property type="protein sequence ID" value="AAL09749.1"/>
    <property type="molecule type" value="mRNA"/>
</dbReference>
<dbReference type="EMBL" id="BT015771">
    <property type="protein sequence ID" value="AAU90061.1"/>
    <property type="molecule type" value="mRNA"/>
</dbReference>
<dbReference type="PIR" id="E96788">
    <property type="entry name" value="E96788"/>
</dbReference>
<dbReference type="RefSeq" id="NP_177726.1">
    <property type="nucleotide sequence ID" value="NM_106248.4"/>
</dbReference>
<dbReference type="SMR" id="Q9LQR8"/>
<dbReference type="BioGRID" id="29150">
    <property type="interactions" value="97"/>
</dbReference>
<dbReference type="FunCoup" id="Q9LQR8">
    <property type="interactions" value="4879"/>
</dbReference>
<dbReference type="IntAct" id="Q9LQR8">
    <property type="interactions" value="7"/>
</dbReference>
<dbReference type="STRING" id="3702.Q9LQR8"/>
<dbReference type="iPTMnet" id="Q9LQR8"/>
<dbReference type="PaxDb" id="3702-AT1G75990.1"/>
<dbReference type="ProteomicsDB" id="226232"/>
<dbReference type="EnsemblPlants" id="AT1G75990.1">
    <property type="protein sequence ID" value="AT1G75990.1"/>
    <property type="gene ID" value="AT1G75990"/>
</dbReference>
<dbReference type="GeneID" id="843931"/>
<dbReference type="Gramene" id="AT1G75990.1">
    <property type="protein sequence ID" value="AT1G75990.1"/>
    <property type="gene ID" value="AT1G75990"/>
</dbReference>
<dbReference type="KEGG" id="ath:AT1G75990"/>
<dbReference type="Araport" id="AT1G75990"/>
<dbReference type="TAIR" id="AT1G75990"/>
<dbReference type="eggNOG" id="KOG2581">
    <property type="taxonomic scope" value="Eukaryota"/>
</dbReference>
<dbReference type="HOGENOM" id="CLU_019858_1_0_1"/>
<dbReference type="InParanoid" id="Q9LQR8"/>
<dbReference type="OMA" id="AKLWFYI"/>
<dbReference type="PhylomeDB" id="Q9LQR8"/>
<dbReference type="PRO" id="PR:Q9LQR8"/>
<dbReference type="Proteomes" id="UP000006548">
    <property type="component" value="Chromosome 1"/>
</dbReference>
<dbReference type="ExpressionAtlas" id="Q9LQR8">
    <property type="expression patterns" value="baseline and differential"/>
</dbReference>
<dbReference type="GO" id="GO:0005739">
    <property type="term" value="C:mitochondrion"/>
    <property type="evidence" value="ECO:0007005"/>
    <property type="project" value="TAIR"/>
</dbReference>
<dbReference type="GO" id="GO:0000502">
    <property type="term" value="C:proteasome complex"/>
    <property type="evidence" value="ECO:0000314"/>
    <property type="project" value="TAIR"/>
</dbReference>
<dbReference type="GO" id="GO:0030234">
    <property type="term" value="F:enzyme regulator activity"/>
    <property type="evidence" value="ECO:0007669"/>
    <property type="project" value="InterPro"/>
</dbReference>
<dbReference type="GO" id="GO:0030163">
    <property type="term" value="P:protein catabolic process"/>
    <property type="evidence" value="ECO:0000304"/>
    <property type="project" value="TAIR"/>
</dbReference>
<dbReference type="GO" id="GO:0042176">
    <property type="term" value="P:regulation of protein catabolic process"/>
    <property type="evidence" value="ECO:0007669"/>
    <property type="project" value="InterPro"/>
</dbReference>
<dbReference type="FunFam" id="1.25.40.570:FF:000017">
    <property type="entry name" value="26S proteasome non-ATPase regulatory subunit 3"/>
    <property type="match status" value="1"/>
</dbReference>
<dbReference type="Gene3D" id="1.25.40.570">
    <property type="match status" value="1"/>
</dbReference>
<dbReference type="InterPro" id="IPR013586">
    <property type="entry name" value="26S_Psome_reg_C"/>
</dbReference>
<dbReference type="InterPro" id="IPR050756">
    <property type="entry name" value="CSN3"/>
</dbReference>
<dbReference type="InterPro" id="IPR000717">
    <property type="entry name" value="PCI_dom"/>
</dbReference>
<dbReference type="InterPro" id="IPR036390">
    <property type="entry name" value="WH_DNA-bd_sf"/>
</dbReference>
<dbReference type="PANTHER" id="PTHR10758:SF2">
    <property type="entry name" value="26S PROTEASOME NON-ATPASE REGULATORY SUBUNIT 3"/>
    <property type="match status" value="1"/>
</dbReference>
<dbReference type="PANTHER" id="PTHR10758">
    <property type="entry name" value="26S PROTEASOME NON-ATPASE REGULATORY SUBUNIT 3/COP9 SIGNALOSOME COMPLEX SUBUNIT 3"/>
    <property type="match status" value="1"/>
</dbReference>
<dbReference type="Pfam" id="PF01399">
    <property type="entry name" value="PCI"/>
    <property type="match status" value="1"/>
</dbReference>
<dbReference type="Pfam" id="PF08375">
    <property type="entry name" value="Rpn3_C"/>
    <property type="match status" value="1"/>
</dbReference>
<dbReference type="SMART" id="SM00753">
    <property type="entry name" value="PAM"/>
    <property type="match status" value="1"/>
</dbReference>
<dbReference type="SMART" id="SM00088">
    <property type="entry name" value="PINT"/>
    <property type="match status" value="1"/>
</dbReference>
<dbReference type="SUPFAM" id="SSF46785">
    <property type="entry name" value="Winged helix' DNA-binding domain"/>
    <property type="match status" value="1"/>
</dbReference>
<dbReference type="PROSITE" id="PS50250">
    <property type="entry name" value="PCI"/>
    <property type="match status" value="1"/>
</dbReference>
<sequence length="487" mass="55591">MTQDVEMKDNQTPTQSVVSAPTSTLQNLKEIAALIDTGSYTKEVRRIARAVRLTVGLRRKLTGSVISSFLDFALVPGSEAHTRLSSFVPKSDEHDMEVDTASSNSQAPPKHLPAELEIYCYFIVLLFLIDQKKYNEAKVCSTASIARLKSVNRRTVDVIASKLYFYYSLSYELTNDLAEIRSTLLALHHSATLRHDELGQETLLNLLLRNYLHYNLYDQAEKLRSKAPRFEAHSNQQFCRYLFYLGKIRTIQLEYTDAKESLLQAARKAPVASLGFRIQCNKWAIIVRLLLGEIPERSIFTQKGMEKTLRPYFELTNAVRIGDLELFGKIQEKFAKTFAEDRTHNLIVRLRHNVIRTGLRNISISYSRISLQDVAQKLRLNSANPVADAESIVAKAIRDGAIDATIDHKNGCMVSKETGDIYSTNEPQTAFNSRIAFCLNMHNEAVRALRFPPNTHREKESEEKRREMKQQEEELAKYMAEEDDDDF</sequence>
<organism>
    <name type="scientific">Arabidopsis thaliana</name>
    <name type="common">Mouse-ear cress</name>
    <dbReference type="NCBI Taxonomy" id="3702"/>
    <lineage>
        <taxon>Eukaryota</taxon>
        <taxon>Viridiplantae</taxon>
        <taxon>Streptophyta</taxon>
        <taxon>Embryophyta</taxon>
        <taxon>Tracheophyta</taxon>
        <taxon>Spermatophyta</taxon>
        <taxon>Magnoliopsida</taxon>
        <taxon>eudicotyledons</taxon>
        <taxon>Gunneridae</taxon>
        <taxon>Pentapetalae</taxon>
        <taxon>rosids</taxon>
        <taxon>malvids</taxon>
        <taxon>Brassicales</taxon>
        <taxon>Brassicaceae</taxon>
        <taxon>Camelineae</taxon>
        <taxon>Arabidopsis</taxon>
    </lineage>
</organism>
<evidence type="ECO:0000250" key="1">
    <source>
        <dbReference type="UniProtKB" id="O43242"/>
    </source>
</evidence>
<evidence type="ECO:0000255" key="2">
    <source>
        <dbReference type="PROSITE-ProRule" id="PRU01185"/>
    </source>
</evidence>
<evidence type="ECO:0000256" key="3">
    <source>
        <dbReference type="SAM" id="MobiDB-lite"/>
    </source>
</evidence>
<evidence type="ECO:0000269" key="4">
    <source>
    </source>
</evidence>
<evidence type="ECO:0000269" key="5">
    <source>
    </source>
</evidence>
<evidence type="ECO:0000269" key="6">
    <source>
    </source>
</evidence>
<evidence type="ECO:0000303" key="7">
    <source>
    </source>
</evidence>
<evidence type="ECO:0000305" key="8"/>
<evidence type="ECO:0000312" key="9">
    <source>
        <dbReference type="Araport" id="AT1G75990"/>
    </source>
</evidence>
<evidence type="ECO:0000312" key="10">
    <source>
        <dbReference type="EMBL" id="AAF26768.2"/>
    </source>
</evidence>